<comment type="function">
    <text evidence="2">Catalyzes the reversible phosphorolytic breakdown of the N-glycosidic bond in the beta-(deoxy)ribonucleoside molecules, with the formation of the corresponding free purine bases and pentose-1-phosphate.</text>
</comment>
<comment type="catalytic activity">
    <reaction evidence="2">
        <text>a purine D-ribonucleoside + phosphate = a purine nucleobase + alpha-D-ribose 1-phosphate</text>
        <dbReference type="Rhea" id="RHEA:19805"/>
        <dbReference type="ChEBI" id="CHEBI:26386"/>
        <dbReference type="ChEBI" id="CHEBI:43474"/>
        <dbReference type="ChEBI" id="CHEBI:57720"/>
        <dbReference type="ChEBI" id="CHEBI:142355"/>
        <dbReference type="EC" id="2.4.2.1"/>
    </reaction>
</comment>
<comment type="catalytic activity">
    <reaction evidence="2">
        <text>a purine 2'-deoxy-D-ribonucleoside + phosphate = a purine nucleobase + 2-deoxy-alpha-D-ribose 1-phosphate</text>
        <dbReference type="Rhea" id="RHEA:36431"/>
        <dbReference type="ChEBI" id="CHEBI:26386"/>
        <dbReference type="ChEBI" id="CHEBI:43474"/>
        <dbReference type="ChEBI" id="CHEBI:57259"/>
        <dbReference type="ChEBI" id="CHEBI:142361"/>
        <dbReference type="EC" id="2.4.2.1"/>
    </reaction>
</comment>
<comment type="subunit">
    <text evidence="2">Homohexamer; trimer of homodimers.</text>
</comment>
<comment type="similarity">
    <text evidence="2">Belongs to the PNP/UDP phosphorylase family.</text>
</comment>
<keyword id="KW-0328">Glycosyltransferase</keyword>
<keyword id="KW-0808">Transferase</keyword>
<dbReference type="EC" id="2.4.2.1" evidence="2"/>
<dbReference type="EMBL" id="CP001283">
    <property type="protein sequence ID" value="ACK89476.1"/>
    <property type="molecule type" value="Genomic_DNA"/>
</dbReference>
<dbReference type="RefSeq" id="WP_000110707.1">
    <property type="nucleotide sequence ID" value="NC_011773.1"/>
</dbReference>
<dbReference type="SMR" id="B7JGU6"/>
<dbReference type="GeneID" id="93009578"/>
<dbReference type="KEGG" id="bcu:BCAH820_1555"/>
<dbReference type="HOGENOM" id="CLU_068457_2_0_9"/>
<dbReference type="Proteomes" id="UP000001363">
    <property type="component" value="Chromosome"/>
</dbReference>
<dbReference type="GO" id="GO:0005829">
    <property type="term" value="C:cytosol"/>
    <property type="evidence" value="ECO:0007669"/>
    <property type="project" value="TreeGrafter"/>
</dbReference>
<dbReference type="GO" id="GO:0004731">
    <property type="term" value="F:purine-nucleoside phosphorylase activity"/>
    <property type="evidence" value="ECO:0007669"/>
    <property type="project" value="UniProtKB-UniRule"/>
</dbReference>
<dbReference type="GO" id="GO:0006152">
    <property type="term" value="P:purine nucleoside catabolic process"/>
    <property type="evidence" value="ECO:0007669"/>
    <property type="project" value="TreeGrafter"/>
</dbReference>
<dbReference type="CDD" id="cd09006">
    <property type="entry name" value="PNP_EcPNPI-like"/>
    <property type="match status" value="1"/>
</dbReference>
<dbReference type="Gene3D" id="3.40.50.1580">
    <property type="entry name" value="Nucleoside phosphorylase domain"/>
    <property type="match status" value="1"/>
</dbReference>
<dbReference type="HAMAP" id="MF_01627">
    <property type="entry name" value="Pur_nucleosid_phosp"/>
    <property type="match status" value="1"/>
</dbReference>
<dbReference type="InterPro" id="IPR004402">
    <property type="entry name" value="DeoD-type"/>
</dbReference>
<dbReference type="InterPro" id="IPR018016">
    <property type="entry name" value="Nucleoside_phosphorylase_CS"/>
</dbReference>
<dbReference type="InterPro" id="IPR000845">
    <property type="entry name" value="Nucleoside_phosphorylase_d"/>
</dbReference>
<dbReference type="InterPro" id="IPR035994">
    <property type="entry name" value="Nucleoside_phosphorylase_sf"/>
</dbReference>
<dbReference type="NCBIfam" id="TIGR00107">
    <property type="entry name" value="deoD"/>
    <property type="match status" value="1"/>
</dbReference>
<dbReference type="NCBIfam" id="NF004489">
    <property type="entry name" value="PRK05819.1"/>
    <property type="match status" value="1"/>
</dbReference>
<dbReference type="NCBIfam" id="NF009914">
    <property type="entry name" value="PRK13374.1"/>
    <property type="match status" value="1"/>
</dbReference>
<dbReference type="PANTHER" id="PTHR43691:SF11">
    <property type="entry name" value="FI09636P-RELATED"/>
    <property type="match status" value="1"/>
</dbReference>
<dbReference type="PANTHER" id="PTHR43691">
    <property type="entry name" value="URIDINE PHOSPHORYLASE"/>
    <property type="match status" value="1"/>
</dbReference>
<dbReference type="Pfam" id="PF01048">
    <property type="entry name" value="PNP_UDP_1"/>
    <property type="match status" value="1"/>
</dbReference>
<dbReference type="SUPFAM" id="SSF53167">
    <property type="entry name" value="Purine and uridine phosphorylases"/>
    <property type="match status" value="1"/>
</dbReference>
<dbReference type="PROSITE" id="PS01232">
    <property type="entry name" value="PNP_UDP_1"/>
    <property type="match status" value="1"/>
</dbReference>
<protein>
    <recommendedName>
        <fullName evidence="2">Purine nucleoside phosphorylase DeoD-type</fullName>
        <shortName evidence="2">PNP</shortName>
        <ecNumber evidence="2">2.4.2.1</ecNumber>
    </recommendedName>
</protein>
<accession>B7JGU6</accession>
<gene>
    <name evidence="2" type="primary">deoD</name>
    <name type="ordered locus">BCAH820_1555</name>
</gene>
<evidence type="ECO:0000250" key="1">
    <source>
        <dbReference type="UniProtKB" id="P50389"/>
    </source>
</evidence>
<evidence type="ECO:0000255" key="2">
    <source>
        <dbReference type="HAMAP-Rule" id="MF_01627"/>
    </source>
</evidence>
<name>DEOD_BACC0</name>
<organism>
    <name type="scientific">Bacillus cereus (strain AH820)</name>
    <dbReference type="NCBI Taxonomy" id="405535"/>
    <lineage>
        <taxon>Bacteria</taxon>
        <taxon>Bacillati</taxon>
        <taxon>Bacillota</taxon>
        <taxon>Bacilli</taxon>
        <taxon>Bacillales</taxon>
        <taxon>Bacillaceae</taxon>
        <taxon>Bacillus</taxon>
        <taxon>Bacillus cereus group</taxon>
    </lineage>
</organism>
<reference key="1">
    <citation type="submission" date="2008-10" db="EMBL/GenBank/DDBJ databases">
        <title>Genome sequence of Bacillus cereus AH820.</title>
        <authorList>
            <person name="Dodson R.J."/>
            <person name="Durkin A.S."/>
            <person name="Rosovitz M.J."/>
            <person name="Rasko D.A."/>
            <person name="Hoffmaster A."/>
            <person name="Ravel J."/>
            <person name="Sutton G."/>
        </authorList>
    </citation>
    <scope>NUCLEOTIDE SEQUENCE [LARGE SCALE GENOMIC DNA]</scope>
    <source>
        <strain>AH820</strain>
    </source>
</reference>
<proteinExistence type="inferred from homology"/>
<sequence>MSVHIEAKQGEIAESILLPGDPLRAKYIAETFLEDVTCYNNVRGMLGFTGTYKGKRVSVQGTGMGVPSISIYVNELIQSYGVKNLIRVGTCGAIQKDVKVRDVIIAMTACTDSNMNRLTFPGFDFAPAANFDLLKKAYDAGTEKGLHVRVGNVLTADVFYRESMDMVKKLGDYGVLAVEMETTALYTLAAKYGVNALSVLTVSDHIFTGEETTSEERQTTFNEMIEIALDAAIQQ</sequence>
<feature type="chain" id="PRO_1000186173" description="Purine nucleoside phosphorylase DeoD-type">
    <location>
        <begin position="1"/>
        <end position="235"/>
    </location>
</feature>
<feature type="active site" description="Proton donor" evidence="2">
    <location>
        <position position="204"/>
    </location>
</feature>
<feature type="binding site" evidence="1">
    <location>
        <position position="4"/>
    </location>
    <ligand>
        <name>a purine D-ribonucleoside</name>
        <dbReference type="ChEBI" id="CHEBI:142355"/>
        <note>ligand shared between dimeric partners</note>
    </ligand>
</feature>
<feature type="binding site" description="in other chain" evidence="1">
    <location>
        <position position="20"/>
    </location>
    <ligand>
        <name>phosphate</name>
        <dbReference type="ChEBI" id="CHEBI:43474"/>
        <note>ligand shared between dimeric partners</note>
    </ligand>
</feature>
<feature type="binding site" description="in other chain" evidence="1">
    <location>
        <position position="24"/>
    </location>
    <ligand>
        <name>phosphate</name>
        <dbReference type="ChEBI" id="CHEBI:43474"/>
        <note>ligand shared between dimeric partners</note>
    </ligand>
</feature>
<feature type="binding site" evidence="1">
    <location>
        <position position="43"/>
    </location>
    <ligand>
        <name>phosphate</name>
        <dbReference type="ChEBI" id="CHEBI:43474"/>
        <note>ligand shared between dimeric partners</note>
    </ligand>
</feature>
<feature type="binding site" description="in other chain" evidence="1">
    <location>
        <begin position="87"/>
        <end position="90"/>
    </location>
    <ligand>
        <name>phosphate</name>
        <dbReference type="ChEBI" id="CHEBI:43474"/>
        <note>ligand shared between dimeric partners</note>
    </ligand>
</feature>
<feature type="binding site" description="in other chain" evidence="1">
    <location>
        <position position="162"/>
    </location>
    <ligand>
        <name>a purine D-ribonucleoside</name>
        <dbReference type="ChEBI" id="CHEBI:142355"/>
        <note>ligand shared between dimeric partners</note>
    </ligand>
</feature>
<feature type="binding site" description="in other chain" evidence="1">
    <location>
        <begin position="179"/>
        <end position="181"/>
    </location>
    <ligand>
        <name>a purine D-ribonucleoside</name>
        <dbReference type="ChEBI" id="CHEBI:142355"/>
        <note>ligand shared between dimeric partners</note>
    </ligand>
</feature>
<feature type="binding site" description="in other chain" evidence="1">
    <location>
        <begin position="203"/>
        <end position="204"/>
    </location>
    <ligand>
        <name>a purine D-ribonucleoside</name>
        <dbReference type="ChEBI" id="CHEBI:142355"/>
        <note>ligand shared between dimeric partners</note>
    </ligand>
</feature>
<feature type="site" description="Important for catalytic activity" evidence="2">
    <location>
        <position position="217"/>
    </location>
</feature>